<accession>Q10587</accession>
<accession>B0QYS8</accession>
<accession>B2RC22</accession>
<accession>Q15729</accession>
<accession>Q7Z3J7</accession>
<accession>Q8IU94</accession>
<accession>Q96TG4</accession>
<proteinExistence type="evidence at protein level"/>
<dbReference type="EMBL" id="U06935">
    <property type="protein sequence ID" value="AAA81373.1"/>
    <property type="status" value="ALT_INIT"/>
    <property type="molecule type" value="mRNA"/>
</dbReference>
<dbReference type="EMBL" id="U44059">
    <property type="protein sequence ID" value="AAB06497.1"/>
    <property type="molecule type" value="mRNA"/>
</dbReference>
<dbReference type="EMBL" id="CR456592">
    <property type="protein sequence ID" value="CAG30478.1"/>
    <property type="molecule type" value="mRNA"/>
</dbReference>
<dbReference type="EMBL" id="CR541827">
    <property type="protein sequence ID" value="CAG46626.1"/>
    <property type="molecule type" value="mRNA"/>
</dbReference>
<dbReference type="EMBL" id="AK091916">
    <property type="protein sequence ID" value="BAG52441.1"/>
    <property type="molecule type" value="mRNA"/>
</dbReference>
<dbReference type="EMBL" id="AK314906">
    <property type="protein sequence ID" value="BAG37419.1"/>
    <property type="molecule type" value="mRNA"/>
</dbReference>
<dbReference type="EMBL" id="AL035659">
    <property type="status" value="NOT_ANNOTATED_CDS"/>
    <property type="molecule type" value="Genomic_DNA"/>
</dbReference>
<dbReference type="EMBL" id="CH471095">
    <property type="protein sequence ID" value="EAW60430.1"/>
    <property type="molecule type" value="Genomic_DNA"/>
</dbReference>
<dbReference type="EMBL" id="CH471095">
    <property type="protein sequence ID" value="EAW60431.1"/>
    <property type="molecule type" value="Genomic_DNA"/>
</dbReference>
<dbReference type="EMBL" id="BC039258">
    <property type="protein sequence ID" value="AAH39258.1"/>
    <property type="molecule type" value="mRNA"/>
</dbReference>
<dbReference type="EMBL" id="BC042476">
    <property type="protein sequence ID" value="AAH42476.1"/>
    <property type="molecule type" value="mRNA"/>
</dbReference>
<dbReference type="EMBL" id="BX537848">
    <property type="protein sequence ID" value="CAD97856.1"/>
    <property type="molecule type" value="mRNA"/>
</dbReference>
<dbReference type="CCDS" id="CCDS14014.1">
    <molecule id="Q10587-1"/>
</dbReference>
<dbReference type="CCDS" id="CCDS46716.1">
    <molecule id="Q10587-2"/>
</dbReference>
<dbReference type="PIR" id="G02360">
    <property type="entry name" value="G02360"/>
</dbReference>
<dbReference type="RefSeq" id="NP_001138870.1">
    <molecule id="Q10587-2"/>
    <property type="nucleotide sequence ID" value="NM_001145398.3"/>
</dbReference>
<dbReference type="RefSeq" id="NP_003207.1">
    <molecule id="Q10587-1"/>
    <property type="nucleotide sequence ID" value="NM_003216.4"/>
</dbReference>
<dbReference type="PDB" id="4U5T">
    <property type="method" value="X-ray"/>
    <property type="resolution" value="3.30 A"/>
    <property type="chains" value="A/B=257-295"/>
</dbReference>
<dbReference type="PDBsum" id="4U5T"/>
<dbReference type="SMR" id="Q10587"/>
<dbReference type="BioGRID" id="112867">
    <property type="interactions" value="5"/>
</dbReference>
<dbReference type="FunCoup" id="Q10587">
    <property type="interactions" value="991"/>
</dbReference>
<dbReference type="IntAct" id="Q10587">
    <property type="interactions" value="33"/>
</dbReference>
<dbReference type="STRING" id="9606.ENSP00000266304"/>
<dbReference type="iPTMnet" id="Q10587"/>
<dbReference type="PhosphoSitePlus" id="Q10587"/>
<dbReference type="BioMuta" id="TEF"/>
<dbReference type="DMDM" id="51338730"/>
<dbReference type="jPOST" id="Q10587"/>
<dbReference type="MassIVE" id="Q10587"/>
<dbReference type="PaxDb" id="9606-ENSP00000266304"/>
<dbReference type="PeptideAtlas" id="Q10587"/>
<dbReference type="ProteomicsDB" id="58863">
    <molecule id="Q10587-1"/>
</dbReference>
<dbReference type="ProteomicsDB" id="58864">
    <molecule id="Q10587-2"/>
</dbReference>
<dbReference type="Antibodypedia" id="26917">
    <property type="antibodies" value="170 antibodies from 25 providers"/>
</dbReference>
<dbReference type="DNASU" id="7008"/>
<dbReference type="Ensembl" id="ENST00000266304.9">
    <molecule id="Q10587-1"/>
    <property type="protein sequence ID" value="ENSP00000266304.4"/>
    <property type="gene ID" value="ENSG00000167074.15"/>
</dbReference>
<dbReference type="Ensembl" id="ENST00000406644.7">
    <molecule id="Q10587-2"/>
    <property type="protein sequence ID" value="ENSP00000385256.3"/>
    <property type="gene ID" value="ENSG00000167074.15"/>
</dbReference>
<dbReference type="GeneID" id="7008"/>
<dbReference type="KEGG" id="hsa:7008"/>
<dbReference type="MANE-Select" id="ENST00000266304.9">
    <property type="protein sequence ID" value="ENSP00000266304.4"/>
    <property type="RefSeq nucleotide sequence ID" value="NM_003216.4"/>
    <property type="RefSeq protein sequence ID" value="NP_003207.1"/>
</dbReference>
<dbReference type="UCSC" id="uc003azx.5">
    <molecule id="Q10587-1"/>
    <property type="organism name" value="human"/>
</dbReference>
<dbReference type="AGR" id="HGNC:11722"/>
<dbReference type="CTD" id="7008"/>
<dbReference type="DisGeNET" id="7008"/>
<dbReference type="GeneCards" id="TEF"/>
<dbReference type="HGNC" id="HGNC:11722">
    <property type="gene designation" value="TEF"/>
</dbReference>
<dbReference type="HPA" id="ENSG00000167074">
    <property type="expression patterns" value="Low tissue specificity"/>
</dbReference>
<dbReference type="MIM" id="188595">
    <property type="type" value="gene"/>
</dbReference>
<dbReference type="neXtProt" id="NX_Q10587"/>
<dbReference type="OpenTargets" id="ENSG00000167074"/>
<dbReference type="PharmGKB" id="PA36439"/>
<dbReference type="VEuPathDB" id="HostDB:ENSG00000167074"/>
<dbReference type="eggNOG" id="KOG3119">
    <property type="taxonomic scope" value="Eukaryota"/>
</dbReference>
<dbReference type="GeneTree" id="ENSGT00940000156578"/>
<dbReference type="HOGENOM" id="CLU_051922_2_0_1"/>
<dbReference type="InParanoid" id="Q10587"/>
<dbReference type="OMA" id="LMENPRE"/>
<dbReference type="OrthoDB" id="6022300at2759"/>
<dbReference type="PAN-GO" id="Q10587">
    <property type="GO annotations" value="4 GO annotations based on evolutionary models"/>
</dbReference>
<dbReference type="PhylomeDB" id="Q10587"/>
<dbReference type="TreeFam" id="TF315869"/>
<dbReference type="PathwayCommons" id="Q10587"/>
<dbReference type="SignaLink" id="Q10587"/>
<dbReference type="SIGNOR" id="Q10587"/>
<dbReference type="BioGRID-ORCS" id="7008">
    <property type="hits" value="31 hits in 1171 CRISPR screens"/>
</dbReference>
<dbReference type="ChiTaRS" id="TEF">
    <property type="organism name" value="human"/>
</dbReference>
<dbReference type="EvolutionaryTrace" id="Q10587"/>
<dbReference type="GeneWiki" id="TEF_(gene)"/>
<dbReference type="GenomeRNAi" id="7008"/>
<dbReference type="Pharos" id="Q10587">
    <property type="development level" value="Tbio"/>
</dbReference>
<dbReference type="PRO" id="PR:Q10587"/>
<dbReference type="Proteomes" id="UP000005640">
    <property type="component" value="Chromosome 22"/>
</dbReference>
<dbReference type="RNAct" id="Q10587">
    <property type="molecule type" value="protein"/>
</dbReference>
<dbReference type="Bgee" id="ENSG00000167074">
    <property type="expression patterns" value="Expressed in cerebellar hemisphere and 181 other cell types or tissues"/>
</dbReference>
<dbReference type="ExpressionAtlas" id="Q10587">
    <property type="expression patterns" value="baseline and differential"/>
</dbReference>
<dbReference type="GO" id="GO:0000785">
    <property type="term" value="C:chromatin"/>
    <property type="evidence" value="ECO:0000247"/>
    <property type="project" value="NTNU_SB"/>
</dbReference>
<dbReference type="GO" id="GO:0005634">
    <property type="term" value="C:nucleus"/>
    <property type="evidence" value="ECO:0000318"/>
    <property type="project" value="GO_Central"/>
</dbReference>
<dbReference type="GO" id="GO:0000981">
    <property type="term" value="F:DNA-binding transcription factor activity, RNA polymerase II-specific"/>
    <property type="evidence" value="ECO:0000247"/>
    <property type="project" value="NTNU_SB"/>
</dbReference>
<dbReference type="GO" id="GO:0000978">
    <property type="term" value="F:RNA polymerase II cis-regulatory region sequence-specific DNA binding"/>
    <property type="evidence" value="ECO:0000318"/>
    <property type="project" value="GO_Central"/>
</dbReference>
<dbReference type="GO" id="GO:1990837">
    <property type="term" value="F:sequence-specific double-stranded DNA binding"/>
    <property type="evidence" value="ECO:0000314"/>
    <property type="project" value="ARUK-UCL"/>
</dbReference>
<dbReference type="GO" id="GO:0045944">
    <property type="term" value="P:positive regulation of transcription by RNA polymerase II"/>
    <property type="evidence" value="ECO:0007669"/>
    <property type="project" value="Ensembl"/>
</dbReference>
<dbReference type="GO" id="GO:0006357">
    <property type="term" value="P:regulation of transcription by RNA polymerase II"/>
    <property type="evidence" value="ECO:0000318"/>
    <property type="project" value="GO_Central"/>
</dbReference>
<dbReference type="GO" id="GO:0048511">
    <property type="term" value="P:rhythmic process"/>
    <property type="evidence" value="ECO:0007669"/>
    <property type="project" value="UniProtKB-KW"/>
</dbReference>
<dbReference type="CDD" id="cd14695">
    <property type="entry name" value="bZIP_HLF"/>
    <property type="match status" value="1"/>
</dbReference>
<dbReference type="FunFam" id="1.20.5.170:FF:000007">
    <property type="entry name" value="hepatic leukemia factor isoform X2"/>
    <property type="match status" value="1"/>
</dbReference>
<dbReference type="Gene3D" id="1.20.5.170">
    <property type="match status" value="1"/>
</dbReference>
<dbReference type="InterPro" id="IPR004827">
    <property type="entry name" value="bZIP"/>
</dbReference>
<dbReference type="InterPro" id="IPR046347">
    <property type="entry name" value="bZIP_sf"/>
</dbReference>
<dbReference type="InterPro" id="IPR040223">
    <property type="entry name" value="PAR_bZIP"/>
</dbReference>
<dbReference type="PANTHER" id="PTHR11988:SF24">
    <property type="entry name" value="THYROTROPH EMBRYONIC FACTOR"/>
    <property type="match status" value="1"/>
</dbReference>
<dbReference type="PANTHER" id="PTHR11988">
    <property type="entry name" value="THYROTROPH EMBRYONIC FACTOR RELATED"/>
    <property type="match status" value="1"/>
</dbReference>
<dbReference type="Pfam" id="PF07716">
    <property type="entry name" value="bZIP_2"/>
    <property type="match status" value="1"/>
</dbReference>
<dbReference type="SMART" id="SM00338">
    <property type="entry name" value="BRLZ"/>
    <property type="match status" value="1"/>
</dbReference>
<dbReference type="SUPFAM" id="SSF57959">
    <property type="entry name" value="Leucine zipper domain"/>
    <property type="match status" value="1"/>
</dbReference>
<dbReference type="PROSITE" id="PS50217">
    <property type="entry name" value="BZIP"/>
    <property type="match status" value="1"/>
</dbReference>
<evidence type="ECO:0000250" key="1"/>
<evidence type="ECO:0000255" key="2">
    <source>
        <dbReference type="PROSITE-ProRule" id="PRU00978"/>
    </source>
</evidence>
<evidence type="ECO:0000256" key="3">
    <source>
        <dbReference type="SAM" id="MobiDB-lite"/>
    </source>
</evidence>
<evidence type="ECO:0000303" key="4">
    <source>
    </source>
</evidence>
<evidence type="ECO:0000305" key="5"/>
<evidence type="ECO:0007744" key="6">
    <source>
    </source>
</evidence>
<evidence type="ECO:0007829" key="7">
    <source>
        <dbReference type="PDB" id="4U5T"/>
    </source>
</evidence>
<keyword id="KW-0002">3D-structure</keyword>
<keyword id="KW-0010">Activator</keyword>
<keyword id="KW-0025">Alternative splicing</keyword>
<keyword id="KW-0090">Biological rhythms</keyword>
<keyword id="KW-0238">DNA-binding</keyword>
<keyword id="KW-0539">Nucleus</keyword>
<keyword id="KW-0597">Phosphoprotein</keyword>
<keyword id="KW-1267">Proteomics identification</keyword>
<keyword id="KW-1185">Reference proteome</keyword>
<keyword id="KW-0804">Transcription</keyword>
<keyword id="KW-0805">Transcription regulation</keyword>
<organism>
    <name type="scientific">Homo sapiens</name>
    <name type="common">Human</name>
    <dbReference type="NCBI Taxonomy" id="9606"/>
    <lineage>
        <taxon>Eukaryota</taxon>
        <taxon>Metazoa</taxon>
        <taxon>Chordata</taxon>
        <taxon>Craniata</taxon>
        <taxon>Vertebrata</taxon>
        <taxon>Euteleostomi</taxon>
        <taxon>Mammalia</taxon>
        <taxon>Eutheria</taxon>
        <taxon>Euarchontoglires</taxon>
        <taxon>Primates</taxon>
        <taxon>Haplorrhini</taxon>
        <taxon>Catarrhini</taxon>
        <taxon>Hominidae</taxon>
        <taxon>Homo</taxon>
    </lineage>
</organism>
<comment type="function">
    <text>Transcription factor that binds to and transactivates the TSHB promoter. Binds to a minimal DNA-binding sequence 5'-[TC][AG][AG]TTA[TC][AG]-3'.</text>
</comment>
<comment type="subunit">
    <text>Binds DNA as a homodimer or a heterodimer. Can form a heterodimer with DBP.</text>
</comment>
<comment type="interaction">
    <interactant intactId="EBI-2796967">
        <id>Q10587</id>
    </interactant>
    <interactant intactId="EBI-10968534">
        <id>P50570-2</id>
        <label>DNM2</label>
    </interactant>
    <organismsDiffer>false</organismsDiffer>
    <experiments>3</experiments>
</comment>
<comment type="interaction">
    <interactant intactId="EBI-2796967">
        <id>Q10587</id>
    </interactant>
    <interactant intactId="EBI-723426">
        <id>Q13084</id>
        <label>MRPL28</label>
    </interactant>
    <organismsDiffer>false</organismsDiffer>
    <experiments>3</experiments>
</comment>
<comment type="interaction">
    <interactant intactId="EBI-2796967">
        <id>Q10587</id>
    </interactant>
    <interactant intactId="EBI-2007911">
        <id>Q16236</id>
        <label>NFE2L2</label>
    </interactant>
    <organismsDiffer>false</organismsDiffer>
    <experiments>5</experiments>
</comment>
<comment type="subcellular location">
    <subcellularLocation>
        <location>Nucleus</location>
    </subcellularLocation>
</comment>
<comment type="alternative products">
    <event type="alternative splicing"/>
    <isoform>
        <id>Q10587-1</id>
        <name>1</name>
        <sequence type="displayed"/>
    </isoform>
    <isoform>
        <id>Q10587-2</id>
        <name>2</name>
        <sequence type="described" ref="VSP_041376"/>
    </isoform>
</comment>
<comment type="induction">
    <text evidence="1">Accumulates according to a robust circadian rhythm.</text>
</comment>
<comment type="similarity">
    <text evidence="5">Belongs to the bZIP family. PAR subfamily.</text>
</comment>
<comment type="sequence caution" evidence="5">
    <conflict type="erroneous initiation">
        <sequence resource="EMBL-CDS" id="AAA81373"/>
    </conflict>
</comment>
<reference key="1">
    <citation type="journal article" date="1994" name="Genomics">
        <title>Chromosomal localization and cDNA cloning of the human DBP and TEF genes.</title>
        <authorList>
            <person name="Khatib Z.A."/>
            <person name="Inaba T."/>
            <person name="Valentine M."/>
            <person name="Look A.T."/>
        </authorList>
    </citation>
    <scope>NUCLEOTIDE SEQUENCE [MRNA] (ISOFORM 1)</scope>
</reference>
<reference key="2">
    <citation type="journal article" date="1996" name="Blood">
        <title>The proto-oncogene HLF and the related basic leucine zipper protein TEF display highly similar DNA-binding and transcriptional regulatory properties.</title>
        <authorList>
            <person name="Hunger S.P."/>
            <person name="Li S."/>
            <person name="Fall M.Z."/>
            <person name="Naumovski L."/>
            <person name="Cleary M.L."/>
        </authorList>
    </citation>
    <scope>NUCLEOTIDE SEQUENCE [MRNA] (ISOFORM 1)</scope>
</reference>
<reference key="3">
    <citation type="journal article" date="2004" name="Genome Biol.">
        <title>A genome annotation-driven approach to cloning the human ORFeome.</title>
        <authorList>
            <person name="Collins J.E."/>
            <person name="Wright C.L."/>
            <person name="Edwards C.A."/>
            <person name="Davis M.P."/>
            <person name="Grinham J.A."/>
            <person name="Cole C.G."/>
            <person name="Goward M.E."/>
            <person name="Aguado B."/>
            <person name="Mallya M."/>
            <person name="Mokrab Y."/>
            <person name="Huckle E.J."/>
            <person name="Beare D.M."/>
            <person name="Dunham I."/>
        </authorList>
    </citation>
    <scope>NUCLEOTIDE SEQUENCE [LARGE SCALE MRNA] (ISOFORM 1)</scope>
</reference>
<reference key="4">
    <citation type="submission" date="2004-06" db="EMBL/GenBank/DDBJ databases">
        <title>Cloning of human full open reading frames in Gateway(TM) system entry vector (pDONR201).</title>
        <authorList>
            <person name="Halleck A."/>
            <person name="Ebert L."/>
            <person name="Mkoundinya M."/>
            <person name="Schick M."/>
            <person name="Eisenstein S."/>
            <person name="Neubert P."/>
            <person name="Kstrang K."/>
            <person name="Schatten R."/>
            <person name="Shen B."/>
            <person name="Henze S."/>
            <person name="Mar W."/>
            <person name="Korn B."/>
            <person name="Zuo D."/>
            <person name="Hu Y."/>
            <person name="LaBaer J."/>
        </authorList>
    </citation>
    <scope>NUCLEOTIDE SEQUENCE [LARGE SCALE MRNA] (ISOFORM 1)</scope>
</reference>
<reference key="5">
    <citation type="journal article" date="2004" name="Nat. Genet.">
        <title>Complete sequencing and characterization of 21,243 full-length human cDNAs.</title>
        <authorList>
            <person name="Ota T."/>
            <person name="Suzuki Y."/>
            <person name="Nishikawa T."/>
            <person name="Otsuki T."/>
            <person name="Sugiyama T."/>
            <person name="Irie R."/>
            <person name="Wakamatsu A."/>
            <person name="Hayashi K."/>
            <person name="Sato H."/>
            <person name="Nagai K."/>
            <person name="Kimura K."/>
            <person name="Makita H."/>
            <person name="Sekine M."/>
            <person name="Obayashi M."/>
            <person name="Nishi T."/>
            <person name="Shibahara T."/>
            <person name="Tanaka T."/>
            <person name="Ishii S."/>
            <person name="Yamamoto J."/>
            <person name="Saito K."/>
            <person name="Kawai Y."/>
            <person name="Isono Y."/>
            <person name="Nakamura Y."/>
            <person name="Nagahari K."/>
            <person name="Murakami K."/>
            <person name="Yasuda T."/>
            <person name="Iwayanagi T."/>
            <person name="Wagatsuma M."/>
            <person name="Shiratori A."/>
            <person name="Sudo H."/>
            <person name="Hosoiri T."/>
            <person name="Kaku Y."/>
            <person name="Kodaira H."/>
            <person name="Kondo H."/>
            <person name="Sugawara M."/>
            <person name="Takahashi M."/>
            <person name="Kanda K."/>
            <person name="Yokoi T."/>
            <person name="Furuya T."/>
            <person name="Kikkawa E."/>
            <person name="Omura Y."/>
            <person name="Abe K."/>
            <person name="Kamihara K."/>
            <person name="Katsuta N."/>
            <person name="Sato K."/>
            <person name="Tanikawa M."/>
            <person name="Yamazaki M."/>
            <person name="Ninomiya K."/>
            <person name="Ishibashi T."/>
            <person name="Yamashita H."/>
            <person name="Murakawa K."/>
            <person name="Fujimori K."/>
            <person name="Tanai H."/>
            <person name="Kimata M."/>
            <person name="Watanabe M."/>
            <person name="Hiraoka S."/>
            <person name="Chiba Y."/>
            <person name="Ishida S."/>
            <person name="Ono Y."/>
            <person name="Takiguchi S."/>
            <person name="Watanabe S."/>
            <person name="Yosida M."/>
            <person name="Hotuta T."/>
            <person name="Kusano J."/>
            <person name="Kanehori K."/>
            <person name="Takahashi-Fujii A."/>
            <person name="Hara H."/>
            <person name="Tanase T.-O."/>
            <person name="Nomura Y."/>
            <person name="Togiya S."/>
            <person name="Komai F."/>
            <person name="Hara R."/>
            <person name="Takeuchi K."/>
            <person name="Arita M."/>
            <person name="Imose N."/>
            <person name="Musashino K."/>
            <person name="Yuuki H."/>
            <person name="Oshima A."/>
            <person name="Sasaki N."/>
            <person name="Aotsuka S."/>
            <person name="Yoshikawa Y."/>
            <person name="Matsunawa H."/>
            <person name="Ichihara T."/>
            <person name="Shiohata N."/>
            <person name="Sano S."/>
            <person name="Moriya S."/>
            <person name="Momiyama H."/>
            <person name="Satoh N."/>
            <person name="Takami S."/>
            <person name="Terashima Y."/>
            <person name="Suzuki O."/>
            <person name="Nakagawa S."/>
            <person name="Senoh A."/>
            <person name="Mizoguchi H."/>
            <person name="Goto Y."/>
            <person name="Shimizu F."/>
            <person name="Wakebe H."/>
            <person name="Hishigaki H."/>
            <person name="Watanabe T."/>
            <person name="Sugiyama A."/>
            <person name="Takemoto M."/>
            <person name="Kawakami B."/>
            <person name="Yamazaki M."/>
            <person name="Watanabe K."/>
            <person name="Kumagai A."/>
            <person name="Itakura S."/>
            <person name="Fukuzumi Y."/>
            <person name="Fujimori Y."/>
            <person name="Komiyama M."/>
            <person name="Tashiro H."/>
            <person name="Tanigami A."/>
            <person name="Fujiwara T."/>
            <person name="Ono T."/>
            <person name="Yamada K."/>
            <person name="Fujii Y."/>
            <person name="Ozaki K."/>
            <person name="Hirao M."/>
            <person name="Ohmori Y."/>
            <person name="Kawabata A."/>
            <person name="Hikiji T."/>
            <person name="Kobatake N."/>
            <person name="Inagaki H."/>
            <person name="Ikema Y."/>
            <person name="Okamoto S."/>
            <person name="Okitani R."/>
            <person name="Kawakami T."/>
            <person name="Noguchi S."/>
            <person name="Itoh T."/>
            <person name="Shigeta K."/>
            <person name="Senba T."/>
            <person name="Matsumura K."/>
            <person name="Nakajima Y."/>
            <person name="Mizuno T."/>
            <person name="Morinaga M."/>
            <person name="Sasaki M."/>
            <person name="Togashi T."/>
            <person name="Oyama M."/>
            <person name="Hata H."/>
            <person name="Watanabe M."/>
            <person name="Komatsu T."/>
            <person name="Mizushima-Sugano J."/>
            <person name="Satoh T."/>
            <person name="Shirai Y."/>
            <person name="Takahashi Y."/>
            <person name="Nakagawa K."/>
            <person name="Okumura K."/>
            <person name="Nagase T."/>
            <person name="Nomura N."/>
            <person name="Kikuchi H."/>
            <person name="Masuho Y."/>
            <person name="Yamashita R."/>
            <person name="Nakai K."/>
            <person name="Yada T."/>
            <person name="Nakamura Y."/>
            <person name="Ohara O."/>
            <person name="Isogai T."/>
            <person name="Sugano S."/>
        </authorList>
    </citation>
    <scope>NUCLEOTIDE SEQUENCE [LARGE SCALE MRNA] (ISOFORMS 1 AND 2)</scope>
    <source>
        <tissue>Cerebellum</tissue>
        <tissue>Kidney</tissue>
    </source>
</reference>
<reference key="6">
    <citation type="journal article" date="1999" name="Nature">
        <title>The DNA sequence of human chromosome 22.</title>
        <authorList>
            <person name="Dunham I."/>
            <person name="Hunt A.R."/>
            <person name="Collins J.E."/>
            <person name="Bruskiewich R."/>
            <person name="Beare D.M."/>
            <person name="Clamp M."/>
            <person name="Smink L.J."/>
            <person name="Ainscough R."/>
            <person name="Almeida J.P."/>
            <person name="Babbage A.K."/>
            <person name="Bagguley C."/>
            <person name="Bailey J."/>
            <person name="Barlow K.F."/>
            <person name="Bates K.N."/>
            <person name="Beasley O.P."/>
            <person name="Bird C.P."/>
            <person name="Blakey S.E."/>
            <person name="Bridgeman A.M."/>
            <person name="Buck D."/>
            <person name="Burgess J."/>
            <person name="Burrill W.D."/>
            <person name="Burton J."/>
            <person name="Carder C."/>
            <person name="Carter N.P."/>
            <person name="Chen Y."/>
            <person name="Clark G."/>
            <person name="Clegg S.M."/>
            <person name="Cobley V.E."/>
            <person name="Cole C.G."/>
            <person name="Collier R.E."/>
            <person name="Connor R."/>
            <person name="Conroy D."/>
            <person name="Corby N.R."/>
            <person name="Coville G.J."/>
            <person name="Cox A.V."/>
            <person name="Davis J."/>
            <person name="Dawson E."/>
            <person name="Dhami P.D."/>
            <person name="Dockree C."/>
            <person name="Dodsworth S.J."/>
            <person name="Durbin R.M."/>
            <person name="Ellington A.G."/>
            <person name="Evans K.L."/>
            <person name="Fey J.M."/>
            <person name="Fleming K."/>
            <person name="French L."/>
            <person name="Garner A.A."/>
            <person name="Gilbert J.G.R."/>
            <person name="Goward M.E."/>
            <person name="Grafham D.V."/>
            <person name="Griffiths M.N.D."/>
            <person name="Hall C."/>
            <person name="Hall R.E."/>
            <person name="Hall-Tamlyn G."/>
            <person name="Heathcott R.W."/>
            <person name="Ho S."/>
            <person name="Holmes S."/>
            <person name="Hunt S.E."/>
            <person name="Jones M.C."/>
            <person name="Kershaw J."/>
            <person name="Kimberley A.M."/>
            <person name="King A."/>
            <person name="Laird G.K."/>
            <person name="Langford C.F."/>
            <person name="Leversha M.A."/>
            <person name="Lloyd C."/>
            <person name="Lloyd D.M."/>
            <person name="Martyn I.D."/>
            <person name="Mashreghi-Mohammadi M."/>
            <person name="Matthews L.H."/>
            <person name="Mccann O.T."/>
            <person name="Mcclay J."/>
            <person name="Mclaren S."/>
            <person name="McMurray A.A."/>
            <person name="Milne S.A."/>
            <person name="Mortimore B.J."/>
            <person name="Odell C.N."/>
            <person name="Pavitt R."/>
            <person name="Pearce A.V."/>
            <person name="Pearson D."/>
            <person name="Phillimore B.J.C.T."/>
            <person name="Phillips S.H."/>
            <person name="Plumb R.W."/>
            <person name="Ramsay H."/>
            <person name="Ramsey Y."/>
            <person name="Rogers L."/>
            <person name="Ross M.T."/>
            <person name="Scott C.E."/>
            <person name="Sehra H.K."/>
            <person name="Skuce C.D."/>
            <person name="Smalley S."/>
            <person name="Smith M.L."/>
            <person name="Soderlund C."/>
            <person name="Spragon L."/>
            <person name="Steward C.A."/>
            <person name="Sulston J.E."/>
            <person name="Swann R.M."/>
            <person name="Vaudin M."/>
            <person name="Wall M."/>
            <person name="Wallis J.M."/>
            <person name="Whiteley M.N."/>
            <person name="Willey D.L."/>
            <person name="Williams L."/>
            <person name="Williams S.A."/>
            <person name="Williamson H."/>
            <person name="Wilmer T.E."/>
            <person name="Wilming L."/>
            <person name="Wright C.L."/>
            <person name="Hubbard T."/>
            <person name="Bentley D.R."/>
            <person name="Beck S."/>
            <person name="Rogers J."/>
            <person name="Shimizu N."/>
            <person name="Minoshima S."/>
            <person name="Kawasaki K."/>
            <person name="Sasaki T."/>
            <person name="Asakawa S."/>
            <person name="Kudoh J."/>
            <person name="Shintani A."/>
            <person name="Shibuya K."/>
            <person name="Yoshizaki Y."/>
            <person name="Aoki N."/>
            <person name="Mitsuyama S."/>
            <person name="Roe B.A."/>
            <person name="Chen F."/>
            <person name="Chu L."/>
            <person name="Crabtree J."/>
            <person name="Deschamps S."/>
            <person name="Do A."/>
            <person name="Do T."/>
            <person name="Dorman A."/>
            <person name="Fang F."/>
            <person name="Fu Y."/>
            <person name="Hu P."/>
            <person name="Hua A."/>
            <person name="Kenton S."/>
            <person name="Lai H."/>
            <person name="Lao H.I."/>
            <person name="Lewis J."/>
            <person name="Lewis S."/>
            <person name="Lin S.-P."/>
            <person name="Loh P."/>
            <person name="Malaj E."/>
            <person name="Nguyen T."/>
            <person name="Pan H."/>
            <person name="Phan S."/>
            <person name="Qi S."/>
            <person name="Qian Y."/>
            <person name="Ray L."/>
            <person name="Ren Q."/>
            <person name="Shaull S."/>
            <person name="Sloan D."/>
            <person name="Song L."/>
            <person name="Wang Q."/>
            <person name="Wang Y."/>
            <person name="Wang Z."/>
            <person name="White J."/>
            <person name="Willingham D."/>
            <person name="Wu H."/>
            <person name="Yao Z."/>
            <person name="Zhan M."/>
            <person name="Zhang G."/>
            <person name="Chissoe S."/>
            <person name="Murray J."/>
            <person name="Miller N."/>
            <person name="Minx P."/>
            <person name="Fulton R."/>
            <person name="Johnson D."/>
            <person name="Bemis G."/>
            <person name="Bentley D."/>
            <person name="Bradshaw H."/>
            <person name="Bourne S."/>
            <person name="Cordes M."/>
            <person name="Du Z."/>
            <person name="Fulton L."/>
            <person name="Goela D."/>
            <person name="Graves T."/>
            <person name="Hawkins J."/>
            <person name="Hinds K."/>
            <person name="Kemp K."/>
            <person name="Latreille P."/>
            <person name="Layman D."/>
            <person name="Ozersky P."/>
            <person name="Rohlfing T."/>
            <person name="Scheet P."/>
            <person name="Walker C."/>
            <person name="Wamsley A."/>
            <person name="Wohldmann P."/>
            <person name="Pepin K."/>
            <person name="Nelson J."/>
            <person name="Korf I."/>
            <person name="Bedell J.A."/>
            <person name="Hillier L.W."/>
            <person name="Mardis E."/>
            <person name="Waterston R."/>
            <person name="Wilson R."/>
            <person name="Emanuel B.S."/>
            <person name="Shaikh T."/>
            <person name="Kurahashi H."/>
            <person name="Saitta S."/>
            <person name="Budarf M.L."/>
            <person name="McDermid H.E."/>
            <person name="Johnson A."/>
            <person name="Wong A.C.C."/>
            <person name="Morrow B.E."/>
            <person name="Edelmann L."/>
            <person name="Kim U.J."/>
            <person name="Shizuya H."/>
            <person name="Simon M.I."/>
            <person name="Dumanski J.P."/>
            <person name="Peyrard M."/>
            <person name="Kedra D."/>
            <person name="Seroussi E."/>
            <person name="Fransson I."/>
            <person name="Tapia I."/>
            <person name="Bruder C.E."/>
            <person name="O'Brien K.P."/>
            <person name="Wilkinson P."/>
            <person name="Bodenteich A."/>
            <person name="Hartman K."/>
            <person name="Hu X."/>
            <person name="Khan A.S."/>
            <person name="Lane L."/>
            <person name="Tilahun Y."/>
            <person name="Wright H."/>
        </authorList>
    </citation>
    <scope>NUCLEOTIDE SEQUENCE [LARGE SCALE GENOMIC DNA]</scope>
</reference>
<reference key="7">
    <citation type="submission" date="2005-07" db="EMBL/GenBank/DDBJ databases">
        <authorList>
            <person name="Mural R.J."/>
            <person name="Istrail S."/>
            <person name="Sutton G.G."/>
            <person name="Florea L."/>
            <person name="Halpern A.L."/>
            <person name="Mobarry C.M."/>
            <person name="Lippert R."/>
            <person name="Walenz B."/>
            <person name="Shatkay H."/>
            <person name="Dew I."/>
            <person name="Miller J.R."/>
            <person name="Flanigan M.J."/>
            <person name="Edwards N.J."/>
            <person name="Bolanos R."/>
            <person name="Fasulo D."/>
            <person name="Halldorsson B.V."/>
            <person name="Hannenhalli S."/>
            <person name="Turner R."/>
            <person name="Yooseph S."/>
            <person name="Lu F."/>
            <person name="Nusskern D.R."/>
            <person name="Shue B.C."/>
            <person name="Zheng X.H."/>
            <person name="Zhong F."/>
            <person name="Delcher A.L."/>
            <person name="Huson D.H."/>
            <person name="Kravitz S.A."/>
            <person name="Mouchard L."/>
            <person name="Reinert K."/>
            <person name="Remington K.A."/>
            <person name="Clark A.G."/>
            <person name="Waterman M.S."/>
            <person name="Eichler E.E."/>
            <person name="Adams M.D."/>
            <person name="Hunkapiller M.W."/>
            <person name="Myers E.W."/>
            <person name="Venter J.C."/>
        </authorList>
    </citation>
    <scope>NUCLEOTIDE SEQUENCE [LARGE SCALE GENOMIC DNA]</scope>
</reference>
<reference key="8">
    <citation type="journal article" date="2004" name="Genome Res.">
        <title>The status, quality, and expansion of the NIH full-length cDNA project: the Mammalian Gene Collection (MGC).</title>
        <authorList>
            <consortium name="The MGC Project Team"/>
        </authorList>
    </citation>
    <scope>NUCLEOTIDE SEQUENCE [LARGE SCALE MRNA] (ISOFORM 1)</scope>
    <source>
        <tissue>Brain</tissue>
    </source>
</reference>
<reference key="9">
    <citation type="journal article" date="2007" name="BMC Genomics">
        <title>The full-ORF clone resource of the German cDNA consortium.</title>
        <authorList>
            <person name="Bechtel S."/>
            <person name="Rosenfelder H."/>
            <person name="Duda A."/>
            <person name="Schmidt C.P."/>
            <person name="Ernst U."/>
            <person name="Wellenreuther R."/>
            <person name="Mehrle A."/>
            <person name="Schuster C."/>
            <person name="Bahr A."/>
            <person name="Bloecker H."/>
            <person name="Heubner D."/>
            <person name="Hoerlein A."/>
            <person name="Michel G."/>
            <person name="Wedler H."/>
            <person name="Koehrer K."/>
            <person name="Ottenwaelder B."/>
            <person name="Poustka A."/>
            <person name="Wiemann S."/>
            <person name="Schupp I."/>
        </authorList>
    </citation>
    <scope>NUCLEOTIDE SEQUENCE [LARGE SCALE MRNA] OF 164-303</scope>
    <source>
        <tissue>Retina</tissue>
    </source>
</reference>
<reference key="10">
    <citation type="journal article" date="2010" name="Sci. Signal.">
        <title>Quantitative phosphoproteomics reveals widespread full phosphorylation site occupancy during mitosis.</title>
        <authorList>
            <person name="Olsen J.V."/>
            <person name="Vermeulen M."/>
            <person name="Santamaria A."/>
            <person name="Kumar C."/>
            <person name="Miller M.L."/>
            <person name="Jensen L.J."/>
            <person name="Gnad F."/>
            <person name="Cox J."/>
            <person name="Jensen T.S."/>
            <person name="Nigg E.A."/>
            <person name="Brunak S."/>
            <person name="Mann M."/>
        </authorList>
    </citation>
    <scope>PHOSPHORYLATION [LARGE SCALE ANALYSIS] AT SER-32</scope>
    <scope>IDENTIFICATION BY MASS SPECTROMETRY [LARGE SCALE ANALYSIS]</scope>
    <source>
        <tissue>Cervix carcinoma</tissue>
    </source>
</reference>
<name>TEF_HUMAN</name>
<feature type="chain" id="PRO_0000076512" description="Thyrotroph embryonic factor">
    <location>
        <begin position="1"/>
        <end position="303"/>
    </location>
</feature>
<feature type="domain" description="bZIP" evidence="2">
    <location>
        <begin position="233"/>
        <end position="296"/>
    </location>
</feature>
<feature type="region of interest" description="Disordered" evidence="3">
    <location>
        <begin position="1"/>
        <end position="63"/>
    </location>
</feature>
<feature type="region of interest" description="Disordered" evidence="3">
    <location>
        <begin position="132"/>
        <end position="176"/>
    </location>
</feature>
<feature type="region of interest" description="Basic motif" evidence="2">
    <location>
        <begin position="235"/>
        <end position="255"/>
    </location>
</feature>
<feature type="region of interest" description="Leucine-zipper" evidence="2">
    <location>
        <begin position="256"/>
        <end position="263"/>
    </location>
</feature>
<feature type="compositionally biased region" description="Basic and acidic residues" evidence="3">
    <location>
        <begin position="41"/>
        <end position="61"/>
    </location>
</feature>
<feature type="compositionally biased region" description="Low complexity" evidence="3">
    <location>
        <begin position="133"/>
        <end position="160"/>
    </location>
</feature>
<feature type="modified residue" description="Phosphoserine" evidence="6">
    <location>
        <position position="32"/>
    </location>
</feature>
<feature type="splice variant" id="VSP_041376" description="In isoform 2." evidence="4">
    <original>MSDAGGGKKPPVDPQAGPGPGPGRAAGERGLSGSFPLVLKKLMENPPREARL</original>
    <variation>MDMPEVLKSLLEHSLPWPEKRT</variation>
    <location>
        <begin position="1"/>
        <end position="52"/>
    </location>
</feature>
<feature type="sequence conflict" description="In Ref. 1; AAA81373." evidence="5" ref="1">
    <original>K</original>
    <variation>E</variation>
    <location>
        <position position="54"/>
    </location>
</feature>
<feature type="helix" evidence="7">
    <location>
        <begin position="261"/>
        <end position="293"/>
    </location>
</feature>
<protein>
    <recommendedName>
        <fullName>Thyrotroph embryonic factor</fullName>
    </recommendedName>
</protein>
<gene>
    <name type="primary">TEF</name>
    <name type="synonym">KIAA1655</name>
</gene>
<sequence>MSDAGGGKKPPVDPQAGPGPGPGRAAGERGLSGSFPLVLKKLMENPPREARLDKEKGKEKLEEDEAAAASTMAVSASLMPPIWDKTIPYDGESFHLEYMDLDEFLLENGIPASPTHLAHNLLLPVAELEGKESASSSTASPPSSSTAIFQPSETVSSTESSLEKERETPSPIDPNCVEVDVNFNPDPADLVLSSVPGGELFNPRKHKFAEEDLKPQPMIKKAKKVFVPDEQKDEKYWTRRKKNNVAAKRSRDARRLKENQITIRAAFLEKENTALRTEVAELRKEVGKCKTIVSKYETKYGPL</sequence>